<feature type="chain" id="PRO_0000283491" description="Putative F-box protein At4g05620">
    <location>
        <begin position="1"/>
        <end position="132"/>
    </location>
</feature>
<feature type="domain" description="F-box">
    <location>
        <begin position="17"/>
        <end position="63"/>
    </location>
</feature>
<proteinExistence type="predicted"/>
<accession>Q9M0U2</accession>
<organism>
    <name type="scientific">Arabidopsis thaliana</name>
    <name type="common">Mouse-ear cress</name>
    <dbReference type="NCBI Taxonomy" id="3702"/>
    <lineage>
        <taxon>Eukaryota</taxon>
        <taxon>Viridiplantae</taxon>
        <taxon>Streptophyta</taxon>
        <taxon>Embryophyta</taxon>
        <taxon>Tracheophyta</taxon>
        <taxon>Spermatophyta</taxon>
        <taxon>Magnoliopsida</taxon>
        <taxon>eudicotyledons</taxon>
        <taxon>Gunneridae</taxon>
        <taxon>Pentapetalae</taxon>
        <taxon>rosids</taxon>
        <taxon>malvids</taxon>
        <taxon>Brassicales</taxon>
        <taxon>Brassicaceae</taxon>
        <taxon>Camelineae</taxon>
        <taxon>Arabidopsis</taxon>
    </lineage>
</organism>
<name>FB222_ARATH</name>
<reference key="1">
    <citation type="journal article" date="1999" name="Nature">
        <title>Sequence and analysis of chromosome 4 of the plant Arabidopsis thaliana.</title>
        <authorList>
            <person name="Mayer K.F.X."/>
            <person name="Schueller C."/>
            <person name="Wambutt R."/>
            <person name="Murphy G."/>
            <person name="Volckaert G."/>
            <person name="Pohl T."/>
            <person name="Duesterhoeft A."/>
            <person name="Stiekema W."/>
            <person name="Entian K.-D."/>
            <person name="Terryn N."/>
            <person name="Harris B."/>
            <person name="Ansorge W."/>
            <person name="Brandt P."/>
            <person name="Grivell L.A."/>
            <person name="Rieger M."/>
            <person name="Weichselgartner M."/>
            <person name="de Simone V."/>
            <person name="Obermaier B."/>
            <person name="Mache R."/>
            <person name="Mueller M."/>
            <person name="Kreis M."/>
            <person name="Delseny M."/>
            <person name="Puigdomenech P."/>
            <person name="Watson M."/>
            <person name="Schmidtheini T."/>
            <person name="Reichert B."/>
            <person name="Portetelle D."/>
            <person name="Perez-Alonso M."/>
            <person name="Boutry M."/>
            <person name="Bancroft I."/>
            <person name="Vos P."/>
            <person name="Hoheisel J."/>
            <person name="Zimmermann W."/>
            <person name="Wedler H."/>
            <person name="Ridley P."/>
            <person name="Langham S.-A."/>
            <person name="McCullagh B."/>
            <person name="Bilham L."/>
            <person name="Robben J."/>
            <person name="van der Schueren J."/>
            <person name="Grymonprez B."/>
            <person name="Chuang Y.-J."/>
            <person name="Vandenbussche F."/>
            <person name="Braeken M."/>
            <person name="Weltjens I."/>
            <person name="Voet M."/>
            <person name="Bastiaens I."/>
            <person name="Aert R."/>
            <person name="Defoor E."/>
            <person name="Weitzenegger T."/>
            <person name="Bothe G."/>
            <person name="Ramsperger U."/>
            <person name="Hilbert H."/>
            <person name="Braun M."/>
            <person name="Holzer E."/>
            <person name="Brandt A."/>
            <person name="Peters S."/>
            <person name="van Staveren M."/>
            <person name="Dirkse W."/>
            <person name="Mooijman P."/>
            <person name="Klein Lankhorst R."/>
            <person name="Rose M."/>
            <person name="Hauf J."/>
            <person name="Koetter P."/>
            <person name="Berneiser S."/>
            <person name="Hempel S."/>
            <person name="Feldpausch M."/>
            <person name="Lamberth S."/>
            <person name="Van den Daele H."/>
            <person name="De Keyser A."/>
            <person name="Buysshaert C."/>
            <person name="Gielen J."/>
            <person name="Villarroel R."/>
            <person name="De Clercq R."/>
            <person name="van Montagu M."/>
            <person name="Rogers J."/>
            <person name="Cronin A."/>
            <person name="Quail M.A."/>
            <person name="Bray-Allen S."/>
            <person name="Clark L."/>
            <person name="Doggett J."/>
            <person name="Hall S."/>
            <person name="Kay M."/>
            <person name="Lennard N."/>
            <person name="McLay K."/>
            <person name="Mayes R."/>
            <person name="Pettett A."/>
            <person name="Rajandream M.A."/>
            <person name="Lyne M."/>
            <person name="Benes V."/>
            <person name="Rechmann S."/>
            <person name="Borkova D."/>
            <person name="Bloecker H."/>
            <person name="Scharfe M."/>
            <person name="Grimm M."/>
            <person name="Loehnert T.-H."/>
            <person name="Dose S."/>
            <person name="de Haan M."/>
            <person name="Maarse A.C."/>
            <person name="Schaefer M."/>
            <person name="Mueller-Auer S."/>
            <person name="Gabel C."/>
            <person name="Fuchs M."/>
            <person name="Fartmann B."/>
            <person name="Granderath K."/>
            <person name="Dauner D."/>
            <person name="Herzl A."/>
            <person name="Neumann S."/>
            <person name="Argiriou A."/>
            <person name="Vitale D."/>
            <person name="Liguori R."/>
            <person name="Piravandi E."/>
            <person name="Massenet O."/>
            <person name="Quigley F."/>
            <person name="Clabauld G."/>
            <person name="Muendlein A."/>
            <person name="Felber R."/>
            <person name="Schnabl S."/>
            <person name="Hiller R."/>
            <person name="Schmidt W."/>
            <person name="Lecharny A."/>
            <person name="Aubourg S."/>
            <person name="Chefdor F."/>
            <person name="Cooke R."/>
            <person name="Berger C."/>
            <person name="Monfort A."/>
            <person name="Casacuberta E."/>
            <person name="Gibbons T."/>
            <person name="Weber N."/>
            <person name="Vandenbol M."/>
            <person name="Bargues M."/>
            <person name="Terol J."/>
            <person name="Torres A."/>
            <person name="Perez-Perez A."/>
            <person name="Purnelle B."/>
            <person name="Bent E."/>
            <person name="Johnson S."/>
            <person name="Tacon D."/>
            <person name="Jesse T."/>
            <person name="Heijnen L."/>
            <person name="Schwarz S."/>
            <person name="Scholler P."/>
            <person name="Heber S."/>
            <person name="Francs P."/>
            <person name="Bielke C."/>
            <person name="Frishman D."/>
            <person name="Haase D."/>
            <person name="Lemcke K."/>
            <person name="Mewes H.-W."/>
            <person name="Stocker S."/>
            <person name="Zaccaria P."/>
            <person name="Bevan M."/>
            <person name="Wilson R.K."/>
            <person name="de la Bastide M."/>
            <person name="Habermann K."/>
            <person name="Parnell L."/>
            <person name="Dedhia N."/>
            <person name="Gnoj L."/>
            <person name="Schutz K."/>
            <person name="Huang E."/>
            <person name="Spiegel L."/>
            <person name="Sekhon M."/>
            <person name="Murray J."/>
            <person name="Sheet P."/>
            <person name="Cordes M."/>
            <person name="Abu-Threideh J."/>
            <person name="Stoneking T."/>
            <person name="Kalicki J."/>
            <person name="Graves T."/>
            <person name="Harmon G."/>
            <person name="Edwards J."/>
            <person name="Latreille P."/>
            <person name="Courtney L."/>
            <person name="Cloud J."/>
            <person name="Abbott A."/>
            <person name="Scott K."/>
            <person name="Johnson D."/>
            <person name="Minx P."/>
            <person name="Bentley D."/>
            <person name="Fulton B."/>
            <person name="Miller N."/>
            <person name="Greco T."/>
            <person name="Kemp K."/>
            <person name="Kramer J."/>
            <person name="Fulton L."/>
            <person name="Mardis E."/>
            <person name="Dante M."/>
            <person name="Pepin K."/>
            <person name="Hillier L.W."/>
            <person name="Nelson J."/>
            <person name="Spieth J."/>
            <person name="Ryan E."/>
            <person name="Andrews S."/>
            <person name="Geisel C."/>
            <person name="Layman D."/>
            <person name="Du H."/>
            <person name="Ali J."/>
            <person name="Berghoff A."/>
            <person name="Jones K."/>
            <person name="Drone K."/>
            <person name="Cotton M."/>
            <person name="Joshu C."/>
            <person name="Antonoiu B."/>
            <person name="Zidanic M."/>
            <person name="Strong C."/>
            <person name="Sun H."/>
            <person name="Lamar B."/>
            <person name="Yordan C."/>
            <person name="Ma P."/>
            <person name="Zhong J."/>
            <person name="Preston R."/>
            <person name="Vil D."/>
            <person name="Shekher M."/>
            <person name="Matero A."/>
            <person name="Shah R."/>
            <person name="Swaby I.K."/>
            <person name="O'Shaughnessy A."/>
            <person name="Rodriguez M."/>
            <person name="Hoffman J."/>
            <person name="Till S."/>
            <person name="Granat S."/>
            <person name="Shohdy N."/>
            <person name="Hasegawa A."/>
            <person name="Hameed A."/>
            <person name="Lodhi M."/>
            <person name="Johnson A."/>
            <person name="Chen E."/>
            <person name="Marra M.A."/>
            <person name="Martienssen R."/>
            <person name="McCombie W.R."/>
        </authorList>
    </citation>
    <scope>NUCLEOTIDE SEQUENCE [LARGE SCALE GENOMIC DNA]</scope>
    <source>
        <strain>cv. Columbia</strain>
    </source>
</reference>
<reference key="2">
    <citation type="journal article" date="2017" name="Plant J.">
        <title>Araport11: a complete reannotation of the Arabidopsis thaliana reference genome.</title>
        <authorList>
            <person name="Cheng C.Y."/>
            <person name="Krishnakumar V."/>
            <person name="Chan A.P."/>
            <person name="Thibaud-Nissen F."/>
            <person name="Schobel S."/>
            <person name="Town C.D."/>
        </authorList>
    </citation>
    <scope>GENOME REANNOTATION</scope>
    <source>
        <strain>cv. Columbia</strain>
    </source>
</reference>
<gene>
    <name type="ordered locus">At4g05620</name>
    <name type="ORF">F21I2.10</name>
</gene>
<sequence length="132" mass="14890">MASPVTTNGKEPLVRKQKKSLSLPHDVLVSCLAHVSRLHYSILSLVLKNFRSLIASPELYKTRSLLGRIESCLYVCLRFPNESHPRWFTLYMKPNQIVANNKSNCNLLVPTPTISSSPAHWLCLIAVGSRIY</sequence>
<protein>
    <recommendedName>
        <fullName>Putative F-box protein At4g05620</fullName>
    </recommendedName>
</protein>
<keyword id="KW-1185">Reference proteome</keyword>
<dbReference type="EMBL" id="AL161504">
    <property type="protein sequence ID" value="CAB77926.1"/>
    <property type="molecule type" value="Genomic_DNA"/>
</dbReference>
<dbReference type="EMBL" id="CP002687">
    <property type="protein sequence ID" value="AEE82539.1"/>
    <property type="molecule type" value="Genomic_DNA"/>
</dbReference>
<dbReference type="PIR" id="F85070">
    <property type="entry name" value="F85070"/>
</dbReference>
<dbReference type="RefSeq" id="NP_192471.1">
    <property type="nucleotide sequence ID" value="NM_116800.1"/>
</dbReference>
<dbReference type="SMR" id="Q9M0U2"/>
<dbReference type="STRING" id="3702.Q9M0U2"/>
<dbReference type="PaxDb" id="3702-AT4G05620.1"/>
<dbReference type="EnsemblPlants" id="AT4G05620.1">
    <property type="protein sequence ID" value="AT4G05620.1"/>
    <property type="gene ID" value="AT4G05620"/>
</dbReference>
<dbReference type="GeneID" id="825934"/>
<dbReference type="Gramene" id="AT4G05620.1">
    <property type="protein sequence ID" value="AT4G05620.1"/>
    <property type="gene ID" value="AT4G05620"/>
</dbReference>
<dbReference type="KEGG" id="ath:AT4G05620"/>
<dbReference type="Araport" id="AT4G05620"/>
<dbReference type="TAIR" id="AT4G05620"/>
<dbReference type="eggNOG" id="KOG1072">
    <property type="taxonomic scope" value="Eukaryota"/>
</dbReference>
<dbReference type="HOGENOM" id="CLU_1919963_0_0_1"/>
<dbReference type="InParanoid" id="Q9M0U2"/>
<dbReference type="OMA" id="NESHPRW"/>
<dbReference type="PhylomeDB" id="Q9M0U2"/>
<dbReference type="PRO" id="PR:Q9M0U2"/>
<dbReference type="Proteomes" id="UP000006548">
    <property type="component" value="Chromosome 4"/>
</dbReference>
<dbReference type="ExpressionAtlas" id="Q9M0U2">
    <property type="expression patterns" value="differential"/>
</dbReference>
<dbReference type="CDD" id="cd22152">
    <property type="entry name" value="F-box_AtAFR-like"/>
    <property type="match status" value="1"/>
</dbReference>
<dbReference type="InterPro" id="IPR050354">
    <property type="entry name" value="F-box/kelch-repeat_ARATH"/>
</dbReference>
<dbReference type="InterPro" id="IPR001810">
    <property type="entry name" value="F-box_dom"/>
</dbReference>
<dbReference type="PANTHER" id="PTHR24414">
    <property type="entry name" value="F-BOX/KELCH-REPEAT PROTEIN SKIP4"/>
    <property type="match status" value="1"/>
</dbReference>
<dbReference type="PANTHER" id="PTHR24414:SF184">
    <property type="entry name" value="GALACTOSE OXIDASE_KELCH REPEAT SUPERFAMILY PROTEIN"/>
    <property type="match status" value="1"/>
</dbReference>
<dbReference type="Pfam" id="PF00646">
    <property type="entry name" value="F-box"/>
    <property type="match status" value="1"/>
</dbReference>